<accession>B5LMM0</accession>
<gene>
    <name evidence="1" type="primary">psbC</name>
</gene>
<evidence type="ECO:0000255" key="1">
    <source>
        <dbReference type="HAMAP-Rule" id="MF_01496"/>
    </source>
</evidence>
<proteinExistence type="inferred from homology"/>
<keyword id="KW-0007">Acetylation</keyword>
<keyword id="KW-0148">Chlorophyll</keyword>
<keyword id="KW-0150">Chloroplast</keyword>
<keyword id="KW-0157">Chromophore</keyword>
<keyword id="KW-0464">Manganese</keyword>
<keyword id="KW-0472">Membrane</keyword>
<keyword id="KW-0479">Metal-binding</keyword>
<keyword id="KW-0597">Phosphoprotein</keyword>
<keyword id="KW-0602">Photosynthesis</keyword>
<keyword id="KW-0604">Photosystem II</keyword>
<keyword id="KW-0934">Plastid</keyword>
<keyword id="KW-1185">Reference proteome</keyword>
<keyword id="KW-0793">Thylakoid</keyword>
<keyword id="KW-0812">Transmembrane</keyword>
<keyword id="KW-1133">Transmembrane helix</keyword>
<organism>
    <name type="scientific">Cicer arietinum</name>
    <name type="common">Chickpea</name>
    <name type="synonym">Garbanzo</name>
    <dbReference type="NCBI Taxonomy" id="3827"/>
    <lineage>
        <taxon>Eukaryota</taxon>
        <taxon>Viridiplantae</taxon>
        <taxon>Streptophyta</taxon>
        <taxon>Embryophyta</taxon>
        <taxon>Tracheophyta</taxon>
        <taxon>Spermatophyta</taxon>
        <taxon>Magnoliopsida</taxon>
        <taxon>eudicotyledons</taxon>
        <taxon>Gunneridae</taxon>
        <taxon>Pentapetalae</taxon>
        <taxon>rosids</taxon>
        <taxon>fabids</taxon>
        <taxon>Fabales</taxon>
        <taxon>Fabaceae</taxon>
        <taxon>Papilionoideae</taxon>
        <taxon>50 kb inversion clade</taxon>
        <taxon>NPAAA clade</taxon>
        <taxon>Hologalegina</taxon>
        <taxon>IRL clade</taxon>
        <taxon>Cicereae</taxon>
        <taxon>Cicer</taxon>
    </lineage>
</organism>
<name>PSBC_CICAR</name>
<reference key="1">
    <citation type="journal article" date="2008" name="Mol. Phylogenet. Evol.">
        <title>Complete plastid genome sequence of the chickpea (Cicer arietinum) and the phylogenetic distribution of rps12 and clpP intron losses among legumes (Leguminosae).</title>
        <authorList>
            <person name="Jansen R.K."/>
            <person name="Wojciechowski M.F."/>
            <person name="Sanniyasi E."/>
            <person name="Lee S.-B."/>
            <person name="Daniell H."/>
        </authorList>
    </citation>
    <scope>NUCLEOTIDE SEQUENCE [LARGE SCALE GENOMIC DNA]</scope>
</reference>
<dbReference type="EMBL" id="EU835853">
    <property type="protein sequence ID" value="ACH41066.1"/>
    <property type="molecule type" value="Genomic_DNA"/>
</dbReference>
<dbReference type="RefSeq" id="YP_002149729.1">
    <property type="nucleotide sequence ID" value="NC_011163.1"/>
</dbReference>
<dbReference type="SMR" id="B5LMM0"/>
<dbReference type="PaxDb" id="3827-XP_004491800.1"/>
<dbReference type="GeneID" id="6797478"/>
<dbReference type="KEGG" id="cam:6797478"/>
<dbReference type="eggNOG" id="ENOG502QR3X">
    <property type="taxonomic scope" value="Eukaryota"/>
</dbReference>
<dbReference type="OrthoDB" id="1926060at2759"/>
<dbReference type="Proteomes" id="UP000087171">
    <property type="component" value="Chloroplast Pltd"/>
</dbReference>
<dbReference type="GO" id="GO:0009535">
    <property type="term" value="C:chloroplast thylakoid membrane"/>
    <property type="evidence" value="ECO:0007669"/>
    <property type="project" value="UniProtKB-SubCell"/>
</dbReference>
<dbReference type="GO" id="GO:0009523">
    <property type="term" value="C:photosystem II"/>
    <property type="evidence" value="ECO:0007669"/>
    <property type="project" value="UniProtKB-KW"/>
</dbReference>
<dbReference type="GO" id="GO:0016168">
    <property type="term" value="F:chlorophyll binding"/>
    <property type="evidence" value="ECO:0007669"/>
    <property type="project" value="UniProtKB-UniRule"/>
</dbReference>
<dbReference type="GO" id="GO:0045156">
    <property type="term" value="F:electron transporter, transferring electrons within the cyclic electron transport pathway of photosynthesis activity"/>
    <property type="evidence" value="ECO:0007669"/>
    <property type="project" value="InterPro"/>
</dbReference>
<dbReference type="GO" id="GO:0046872">
    <property type="term" value="F:metal ion binding"/>
    <property type="evidence" value="ECO:0007669"/>
    <property type="project" value="UniProtKB-KW"/>
</dbReference>
<dbReference type="GO" id="GO:0009772">
    <property type="term" value="P:photosynthetic electron transport in photosystem II"/>
    <property type="evidence" value="ECO:0007669"/>
    <property type="project" value="InterPro"/>
</dbReference>
<dbReference type="FunFam" id="1.10.10.670:FF:000001">
    <property type="entry name" value="Photosystem II CP43 reaction center protein"/>
    <property type="match status" value="1"/>
</dbReference>
<dbReference type="Gene3D" id="1.10.10.670">
    <property type="entry name" value="photosystem ii from thermosynechococcus elongatus"/>
    <property type="match status" value="1"/>
</dbReference>
<dbReference type="HAMAP" id="MF_01496">
    <property type="entry name" value="PSII_PsbC_CP43"/>
    <property type="match status" value="1"/>
</dbReference>
<dbReference type="InterPro" id="IPR000932">
    <property type="entry name" value="PS_antenna-like"/>
</dbReference>
<dbReference type="InterPro" id="IPR036001">
    <property type="entry name" value="PS_II_antenna-like_sf"/>
</dbReference>
<dbReference type="InterPro" id="IPR005869">
    <property type="entry name" value="PSII_PsbC"/>
</dbReference>
<dbReference type="InterPro" id="IPR044900">
    <property type="entry name" value="PSII_PsbC_sf"/>
</dbReference>
<dbReference type="NCBIfam" id="TIGR01153">
    <property type="entry name" value="psbC"/>
    <property type="match status" value="1"/>
</dbReference>
<dbReference type="Pfam" id="PF00421">
    <property type="entry name" value="PSII"/>
    <property type="match status" value="1"/>
</dbReference>
<dbReference type="SUPFAM" id="SSF161077">
    <property type="entry name" value="Photosystem II antenna protein-like"/>
    <property type="match status" value="1"/>
</dbReference>
<geneLocation type="chloroplast"/>
<feature type="propeptide" id="PRO_0000431128" evidence="1">
    <location>
        <begin position="1"/>
        <end position="14"/>
    </location>
</feature>
<feature type="chain" id="PRO_0000361350" description="Photosystem II CP43 reaction center protein" evidence="1">
    <location>
        <begin position="15"/>
        <end position="473"/>
    </location>
</feature>
<feature type="transmembrane region" description="Helical" evidence="1">
    <location>
        <begin position="69"/>
        <end position="93"/>
    </location>
</feature>
<feature type="transmembrane region" description="Helical" evidence="1">
    <location>
        <begin position="134"/>
        <end position="155"/>
    </location>
</feature>
<feature type="transmembrane region" description="Helical" evidence="1">
    <location>
        <begin position="178"/>
        <end position="200"/>
    </location>
</feature>
<feature type="transmembrane region" description="Helical" evidence="1">
    <location>
        <begin position="255"/>
        <end position="275"/>
    </location>
</feature>
<feature type="transmembrane region" description="Helical" evidence="1">
    <location>
        <begin position="291"/>
        <end position="312"/>
    </location>
</feature>
<feature type="transmembrane region" description="Helical" evidence="1">
    <location>
        <begin position="447"/>
        <end position="471"/>
    </location>
</feature>
<feature type="binding site" evidence="1">
    <location>
        <position position="367"/>
    </location>
    <ligand>
        <name>[CaMn4O5] cluster</name>
        <dbReference type="ChEBI" id="CHEBI:189552"/>
    </ligand>
</feature>
<feature type="modified residue" description="N-acetylthreonine" evidence="1">
    <location>
        <position position="15"/>
    </location>
</feature>
<feature type="modified residue" description="Phosphothreonine" evidence="1">
    <location>
        <position position="15"/>
    </location>
</feature>
<sequence length="473" mass="51878">MKTLYSLRRFYHVETLFNGTLALTGRDQETTGFAWWAGNARLINLSGKLLGAHVAHAGLIVFWAGAMNLFEVAHFVPEKPMYEQGLILLPHLATLGWGVGPGGEVIDTFPYFVSGVLHLISSAVLGFGGIYHALLGPETLEESFPFFGYVWKDRNKMTTILGIHLILLGIGAFLLVFKASYFGGIYDTWAPGGGDVRKITNLTLSPSIIFGYLLKSPFGGEGWIVSVDDLEDIIGGHVWLGSICILGGIWHILTKPFAWARRALVWSGEAYLSYSLGALAVFGFIACCFVWFNNTAYPSEFYGPTGPEASQAQAFTFLVRDQRLGANVGSAQGPTGLGKYLMRSPTGEVIFGGETMRFWDLRAPWLEPLRGPNGLDLSRLKKDIQPWQERRSAEYMTHAPLGSLNSVGGVATEINAVNYVSPRSWLATSHFVLGFFLFVGHLWHAGRARAAAAGFEKGIDRDFEPVLSMTPLN</sequence>
<protein>
    <recommendedName>
        <fullName evidence="1">Photosystem II CP43 reaction center protein</fullName>
    </recommendedName>
    <alternativeName>
        <fullName evidence="1">PSII 43 kDa protein</fullName>
    </alternativeName>
    <alternativeName>
        <fullName evidence="1">Protein CP-43</fullName>
    </alternativeName>
</protein>
<comment type="function">
    <text evidence="1">One of the components of the core complex of photosystem II (PSII). It binds chlorophyll and helps catalyze the primary light-induced photochemical processes of PSII. PSII is a light-driven water:plastoquinone oxidoreductase, using light energy to abstract electrons from H(2)O, generating O(2) and a proton gradient subsequently used for ATP formation.</text>
</comment>
<comment type="cofactor">
    <text evidence="1">Binds multiple chlorophylls and provides some of the ligands for the Ca-4Mn-5O cluster of the oxygen-evolving complex. It may also provide a ligand for a Cl- that is required for oxygen evolution. PSII binds additional chlorophylls, carotenoids and specific lipids.</text>
</comment>
<comment type="subunit">
    <text evidence="1">PSII is composed of 1 copy each of membrane proteins PsbA, PsbB, PsbC, PsbD, PsbE, PsbF, PsbH, PsbI, PsbJ, PsbK, PsbL, PsbM, PsbT, PsbX, PsbY, PsbZ, Psb30/Ycf12, at least 3 peripheral proteins of the oxygen-evolving complex and a large number of cofactors. It forms dimeric complexes.</text>
</comment>
<comment type="subcellular location">
    <subcellularLocation>
        <location evidence="1">Plastid</location>
        <location evidence="1">Chloroplast thylakoid membrane</location>
        <topology evidence="1">Multi-pass membrane protein</topology>
    </subcellularLocation>
</comment>
<comment type="similarity">
    <text evidence="1">Belongs to the PsbB/PsbC family. PsbC subfamily.</text>
</comment>